<feature type="chain" id="PRO_0000197298" description="Metallothionein">
    <location>
        <begin position="1"/>
        <end position="60"/>
    </location>
</feature>
<feature type="region of interest" description="Beta">
    <location>
        <begin position="1"/>
        <end position="28"/>
    </location>
</feature>
<feature type="region of interest" description="Alpha">
    <location>
        <begin position="29"/>
        <end position="60"/>
    </location>
</feature>
<feature type="binding site" evidence="2">
    <location>
        <position position="4"/>
    </location>
    <ligand>
        <name>a divalent metal cation</name>
        <dbReference type="ChEBI" id="CHEBI:60240"/>
        <label>1</label>
        <note>in cluster B</note>
    </ligand>
</feature>
<feature type="binding site" evidence="2">
    <location>
        <position position="6"/>
    </location>
    <ligand>
        <name>a divalent metal cation</name>
        <dbReference type="ChEBI" id="CHEBI:60240"/>
        <label>1</label>
        <note>in cluster B</note>
    </ligand>
</feature>
<feature type="binding site" evidence="2">
    <location>
        <position position="6"/>
    </location>
    <ligand>
        <name>a divalent metal cation</name>
        <dbReference type="ChEBI" id="CHEBI:60240"/>
        <label>2</label>
        <note>in cluster B</note>
    </ligand>
</feature>
<feature type="binding site" evidence="2">
    <location>
        <position position="12"/>
    </location>
    <ligand>
        <name>a divalent metal cation</name>
        <dbReference type="ChEBI" id="CHEBI:60240"/>
        <label>2</label>
        <note>in cluster B</note>
    </ligand>
</feature>
<feature type="binding site" evidence="2">
    <location>
        <position position="14"/>
    </location>
    <ligand>
        <name>a divalent metal cation</name>
        <dbReference type="ChEBI" id="CHEBI:60240"/>
        <label>2</label>
        <note>in cluster B</note>
    </ligand>
</feature>
<feature type="binding site" evidence="2">
    <location>
        <position position="14"/>
    </location>
    <ligand>
        <name>a divalent metal cation</name>
        <dbReference type="ChEBI" id="CHEBI:60240"/>
        <label>3</label>
        <note>in cluster B</note>
    </ligand>
</feature>
<feature type="binding site" evidence="2">
    <location>
        <position position="18"/>
    </location>
    <ligand>
        <name>a divalent metal cation</name>
        <dbReference type="ChEBI" id="CHEBI:60240"/>
        <label>3</label>
        <note>in cluster B</note>
    </ligand>
</feature>
<feature type="binding site" evidence="2">
    <location>
        <position position="20"/>
    </location>
    <ligand>
        <name>a divalent metal cation</name>
        <dbReference type="ChEBI" id="CHEBI:60240"/>
        <label>1</label>
        <note>in cluster B</note>
    </ligand>
</feature>
<feature type="binding site" evidence="2">
    <location>
        <position position="23"/>
    </location>
    <ligand>
        <name>a divalent metal cation</name>
        <dbReference type="ChEBI" id="CHEBI:60240"/>
        <label>1</label>
        <note>in cluster B</note>
    </ligand>
</feature>
<feature type="binding site" evidence="2">
    <location>
        <position position="23"/>
    </location>
    <ligand>
        <name>a divalent metal cation</name>
        <dbReference type="ChEBI" id="CHEBI:60240"/>
        <label>3</label>
        <note>in cluster B</note>
    </ligand>
</feature>
<feature type="binding site" evidence="2">
    <location>
        <position position="25"/>
    </location>
    <ligand>
        <name>a divalent metal cation</name>
        <dbReference type="ChEBI" id="CHEBI:60240"/>
        <label>2</label>
        <note>in cluster B</note>
    </ligand>
</feature>
<feature type="binding site" evidence="2">
    <location>
        <position position="28"/>
    </location>
    <ligand>
        <name>a divalent metal cation</name>
        <dbReference type="ChEBI" id="CHEBI:60240"/>
        <label>3</label>
        <note>in cluster B</note>
    </ligand>
</feature>
<feature type="binding site" evidence="2">
    <location>
        <position position="32"/>
    </location>
    <ligand>
        <name>a divalent metal cation</name>
        <dbReference type="ChEBI" id="CHEBI:60240"/>
        <label>4</label>
        <note>in cluster A</note>
    </ligand>
</feature>
<feature type="binding site" evidence="2">
    <location>
        <position position="33"/>
    </location>
    <ligand>
        <name>a divalent metal cation</name>
        <dbReference type="ChEBI" id="CHEBI:60240"/>
        <label>4</label>
        <note>in cluster A</note>
    </ligand>
</feature>
<feature type="binding site" evidence="2">
    <location>
        <position position="33"/>
    </location>
    <ligand>
        <name>a divalent metal cation</name>
        <dbReference type="ChEBI" id="CHEBI:60240"/>
        <label>5</label>
        <note>in cluster A</note>
    </ligand>
</feature>
<feature type="binding site" evidence="2">
    <location>
        <position position="35"/>
    </location>
    <ligand>
        <name>a divalent metal cation</name>
        <dbReference type="ChEBI" id="CHEBI:60240"/>
        <label>5</label>
        <note>in cluster A</note>
    </ligand>
</feature>
<feature type="binding site" evidence="2">
    <location>
        <position position="36"/>
    </location>
    <ligand>
        <name>a divalent metal cation</name>
        <dbReference type="ChEBI" id="CHEBI:60240"/>
        <label>5</label>
        <note>in cluster A</note>
    </ligand>
</feature>
<feature type="binding site" evidence="2">
    <location>
        <position position="36"/>
    </location>
    <ligand>
        <name>a divalent metal cation</name>
        <dbReference type="ChEBI" id="CHEBI:60240"/>
        <label>6</label>
        <note>in cluster A</note>
    </ligand>
</feature>
<feature type="binding site" evidence="2">
    <location>
        <position position="40"/>
    </location>
    <ligand>
        <name>a divalent metal cation</name>
        <dbReference type="ChEBI" id="CHEBI:60240"/>
        <label>6</label>
        <note>in cluster A</note>
    </ligand>
</feature>
<feature type="binding site" evidence="2">
    <location>
        <position position="43"/>
    </location>
    <ligand>
        <name>a divalent metal cation</name>
        <dbReference type="ChEBI" id="CHEBI:60240"/>
        <label>4</label>
        <note>in cluster A</note>
    </ligand>
</feature>
<feature type="binding site" evidence="2">
    <location>
        <position position="43"/>
    </location>
    <ligand>
        <name>a divalent metal cation</name>
        <dbReference type="ChEBI" id="CHEBI:60240"/>
        <label>6</label>
        <note>in cluster A</note>
    </ligand>
</feature>
<feature type="binding site" evidence="2">
    <location>
        <position position="47"/>
    </location>
    <ligand>
        <name>a divalent metal cation</name>
        <dbReference type="ChEBI" id="CHEBI:60240"/>
        <label>4</label>
        <note>in cluster A</note>
    </ligand>
</feature>
<feature type="binding site" evidence="2">
    <location>
        <position position="49"/>
    </location>
    <ligand>
        <name>a divalent metal cation</name>
        <dbReference type="ChEBI" id="CHEBI:60240"/>
        <label>5</label>
        <note>in cluster A</note>
    </ligand>
</feature>
<feature type="binding site" evidence="2">
    <location>
        <position position="49"/>
    </location>
    <ligand>
        <name>a divalent metal cation</name>
        <dbReference type="ChEBI" id="CHEBI:60240"/>
        <label>7</label>
        <note>in cluster A</note>
    </ligand>
</feature>
<feature type="binding site" evidence="3">
    <location>
        <position position="54"/>
    </location>
    <ligand>
        <name>a divalent metal cation</name>
        <dbReference type="ChEBI" id="CHEBI:60240"/>
        <label>7</label>
        <note>in cluster A</note>
    </ligand>
</feature>
<feature type="binding site" evidence="2">
    <location>
        <position position="58"/>
    </location>
    <ligand>
        <name>a divalent metal cation</name>
        <dbReference type="ChEBI" id="CHEBI:60240"/>
        <label>7</label>
        <note>in cluster A</note>
    </ligand>
</feature>
<feature type="binding site" evidence="2">
    <location>
        <position position="59"/>
    </location>
    <ligand>
        <name>a divalent metal cation</name>
        <dbReference type="ChEBI" id="CHEBI:60240"/>
        <label>6</label>
        <note>in cluster A</note>
    </ligand>
</feature>
<feature type="binding site" evidence="2">
    <location>
        <position position="59"/>
    </location>
    <ligand>
        <name>a divalent metal cation</name>
        <dbReference type="ChEBI" id="CHEBI:60240"/>
        <label>7</label>
        <note>in cluster A</note>
    </ligand>
</feature>
<feature type="sequence conflict" description="In Ref. 2; AAP14678." evidence="4" ref="2">
    <original>S</original>
    <variation>T</variation>
    <location>
        <position position="19"/>
    </location>
</feature>
<dbReference type="EMBL" id="S75042">
    <property type="protein sequence ID" value="AAB32778.1"/>
    <property type="molecule type" value="mRNA"/>
</dbReference>
<dbReference type="EMBL" id="AY257202">
    <property type="protein sequence ID" value="AAP14678.1"/>
    <property type="molecule type" value="Genomic_DNA"/>
</dbReference>
<dbReference type="PIR" id="JC2420">
    <property type="entry name" value="JC2420"/>
</dbReference>
<dbReference type="SMR" id="P52726"/>
<dbReference type="GO" id="GO:0046872">
    <property type="term" value="F:metal ion binding"/>
    <property type="evidence" value="ECO:0007669"/>
    <property type="project" value="UniProtKB-KW"/>
</dbReference>
<dbReference type="FunFam" id="4.10.10.10:FF:000001">
    <property type="entry name" value="Metallothionein"/>
    <property type="match status" value="1"/>
</dbReference>
<dbReference type="Gene3D" id="4.10.10.10">
    <property type="entry name" value="Metallothionein Isoform II"/>
    <property type="match status" value="1"/>
</dbReference>
<dbReference type="InterPro" id="IPR017854">
    <property type="entry name" value="Metalthion_dom_sf"/>
</dbReference>
<dbReference type="InterPro" id="IPR023587">
    <property type="entry name" value="Metalthion_dom_sf_vert"/>
</dbReference>
<dbReference type="InterPro" id="IPR000006">
    <property type="entry name" value="Metalthion_vert"/>
</dbReference>
<dbReference type="InterPro" id="IPR018064">
    <property type="entry name" value="Metalthion_vert_metal_BS"/>
</dbReference>
<dbReference type="PANTHER" id="PTHR23299">
    <property type="entry name" value="METALLOTHIONEIN"/>
    <property type="match status" value="1"/>
</dbReference>
<dbReference type="PANTHER" id="PTHR23299:SF24">
    <property type="entry name" value="METALLOTHIONEIN-1X"/>
    <property type="match status" value="1"/>
</dbReference>
<dbReference type="Pfam" id="PF00131">
    <property type="entry name" value="Metallothio"/>
    <property type="match status" value="1"/>
</dbReference>
<dbReference type="PRINTS" id="PR00860">
    <property type="entry name" value="MTVERTEBRATE"/>
</dbReference>
<dbReference type="SUPFAM" id="SSF57868">
    <property type="entry name" value="Metallothionein"/>
    <property type="match status" value="1"/>
</dbReference>
<dbReference type="PROSITE" id="PS00203">
    <property type="entry name" value="METALLOTHIONEIN_VRT"/>
    <property type="match status" value="1"/>
</dbReference>
<name>MT_OREMO</name>
<organism>
    <name type="scientific">Oreochromis mossambicus</name>
    <name type="common">Mozambique tilapia</name>
    <name type="synonym">Tilapia mossambica</name>
    <dbReference type="NCBI Taxonomy" id="8127"/>
    <lineage>
        <taxon>Eukaryota</taxon>
        <taxon>Metazoa</taxon>
        <taxon>Chordata</taxon>
        <taxon>Craniata</taxon>
        <taxon>Vertebrata</taxon>
        <taxon>Euteleostomi</taxon>
        <taxon>Actinopterygii</taxon>
        <taxon>Neopterygii</taxon>
        <taxon>Teleostei</taxon>
        <taxon>Neoteleostei</taxon>
        <taxon>Acanthomorphata</taxon>
        <taxon>Ovalentaria</taxon>
        <taxon>Cichlomorphae</taxon>
        <taxon>Cichliformes</taxon>
        <taxon>Cichlidae</taxon>
        <taxon>African cichlids</taxon>
        <taxon>Pseudocrenilabrinae</taxon>
        <taxon>Oreochromini</taxon>
        <taxon>Oreochromis</taxon>
    </lineage>
</organism>
<comment type="function">
    <text evidence="1">Metallothioneins have a high content of cysteine residues that bind various heavy metals.</text>
</comment>
<comment type="domain">
    <text>Class I metallothioneins contain 2 metal-binding domains: four divalent ions are chelated within cluster A of the alpha domain and are coordinated via cysteinyl thiolate bridges to 11 cysteine ligands. Cluster B, the corresponding region within the beta domain, can ligate three divalent ions to 9 cysteines.</text>
</comment>
<comment type="similarity">
    <text evidence="4">Belongs to the metallothionein superfamily. Type 1 family.</text>
</comment>
<accession>P52726</accession>
<accession>Q7ZZP8</accession>
<gene>
    <name type="primary">mt</name>
</gene>
<proteinExistence type="inferred from homology"/>
<evidence type="ECO:0000250" key="1"/>
<evidence type="ECO:0000250" key="2">
    <source>
        <dbReference type="UniProtKB" id="P02795"/>
    </source>
</evidence>
<evidence type="ECO:0000250" key="3">
    <source>
        <dbReference type="UniProtKB" id="P62339"/>
    </source>
</evidence>
<evidence type="ECO:0000305" key="4"/>
<keyword id="KW-0479">Metal-binding</keyword>
<keyword id="KW-0480">Metal-thiolate cluster</keyword>
<sequence>MDPCECAKTGTCNCGGSCSCTKCSCKSCKKSCCDCCPSGCSKCASGCVCKGKTCDTSCCQ</sequence>
<reference key="1">
    <citation type="journal article" date="1994" name="Biochem. Biophys. Res. Commun.">
        <title>PCR-cloning of goldfish and tilapia metallothionein complementary DNAs.</title>
        <authorList>
            <person name="Chan K.M."/>
        </authorList>
    </citation>
    <scope>NUCLEOTIDE SEQUENCE [MRNA]</scope>
    <source>
        <tissue>Liver</tissue>
    </source>
</reference>
<reference key="2">
    <citation type="submission" date="2003-03" db="EMBL/GenBank/DDBJ databases">
        <title>Tilapia metallothionein genes: PCR-cloning and gene regulation studies in vitro.</title>
        <authorList>
            <person name="Cheung P.L."/>
            <person name="Lam K.L."/>
            <person name="Chan K.M."/>
        </authorList>
    </citation>
    <scope>NUCLEOTIDE SEQUENCE [GENOMIC DNA]</scope>
</reference>
<protein>
    <recommendedName>
        <fullName>Metallothionein</fullName>
        <shortName>MT</shortName>
    </recommendedName>
</protein>